<organism>
    <name type="scientific">Canine adenovirus serotype 1 (strain RI261)</name>
    <name type="common">CAdV-1</name>
    <name type="synonym">Canine adenovirus 1 (strain RI261)</name>
    <dbReference type="NCBI Taxonomy" id="69151"/>
    <lineage>
        <taxon>Viruses</taxon>
        <taxon>Varidnaviria</taxon>
        <taxon>Bamfordvirae</taxon>
        <taxon>Preplasmiviricota</taxon>
        <taxon>Tectiliviricetes</taxon>
        <taxon>Rowavirales</taxon>
        <taxon>Adenoviridae</taxon>
        <taxon>Mastadenovirus</taxon>
        <taxon>Canine mastadenovirus A</taxon>
    </lineage>
</organism>
<keyword id="KW-0244">Early protein</keyword>
<keyword id="KW-0325">Glycoprotein</keyword>
<reference key="1">
    <citation type="journal article" date="1997" name="J. Gen. Virol.">
        <title>Complete DNA sequence of canine adenovirus type 1.</title>
        <authorList>
            <person name="Morrison M.D."/>
            <person name="Onions D.E."/>
            <person name="Nicolson L."/>
        </authorList>
    </citation>
    <scope>NUCLEOTIDE SEQUENCE [LARGE SCALE GENOMIC DNA]</scope>
</reference>
<proteinExistence type="predicted"/>
<feature type="chain" id="PRO_0000221769" description="Early E3 22.1 kDa glycoprotein">
    <location>
        <begin position="1"/>
        <end position="194"/>
    </location>
</feature>
<feature type="glycosylation site" description="N-linked (GlcNAc...) asparagine; by host" evidence="1">
    <location>
        <position position="19"/>
    </location>
</feature>
<feature type="glycosylation site" description="N-linked (GlcNAc...) asparagine; by host" evidence="1">
    <location>
        <position position="60"/>
    </location>
</feature>
<feature type="glycosylation site" description="N-linked (GlcNAc...) asparagine; by host" evidence="1">
    <location>
        <position position="75"/>
    </location>
</feature>
<feature type="glycosylation site" description="N-linked (GlcNAc...) asparagine; by host" evidence="1">
    <location>
        <position position="87"/>
    </location>
</feature>
<feature type="glycosylation site" description="N-linked (GlcNAc...) asparagine; by host" evidence="1">
    <location>
        <position position="125"/>
    </location>
</feature>
<feature type="glycosylation site" description="N-linked (GlcNAc...) asparagine; by host" evidence="1">
    <location>
        <position position="138"/>
    </location>
</feature>
<accession>Q96688</accession>
<dbReference type="EMBL" id="Y07760">
    <property type="protein sequence ID" value="CAA69043.1"/>
    <property type="molecule type" value="Genomic_DNA"/>
</dbReference>
<dbReference type="RefSeq" id="AP_000067.1">
    <property type="nucleotide sequence ID" value="AC_000003.1"/>
</dbReference>
<dbReference type="RefSeq" id="NP_044205.1">
    <property type="nucleotide sequence ID" value="NC_001734.1"/>
</dbReference>
<dbReference type="GeneID" id="1488939"/>
<dbReference type="KEGG" id="vg:1488939"/>
<dbReference type="Proteomes" id="UP000126130">
    <property type="component" value="Segment"/>
</dbReference>
<name>E322_ADECR</name>
<organismHost>
    <name type="scientific">Canis lupus familiaris</name>
    <name type="common">Dog</name>
    <name type="synonym">Canis familiaris</name>
    <dbReference type="NCBI Taxonomy" id="9615"/>
</organismHost>
<sequence>MRFCFFFCFTASIFCTTGNSSDIVFCCAHTPCLLHLEVDQETSVTWIDSNTGQIPLCLSNGTCHISEKGLHFSANFSKDGLYIAIINETNYHAAEHYYLVYIYENCHQMPYDSPRHTGHKGTSFNWSMGLWLVKCSHNKTFFLPFVLDSAKSAPIIMTETAITIYISMIFLIVSLLTFLNVLITLNNKYKHYGV</sequence>
<protein>
    <recommendedName>
        <fullName>Early E3 22.1 kDa glycoprotein</fullName>
    </recommendedName>
</protein>
<evidence type="ECO:0000255" key="1"/>